<accession>A6VQX0</accession>
<feature type="chain" id="PRO_0000320714" description="Protein translocase subunit SecA">
    <location>
        <begin position="1"/>
        <end position="915"/>
    </location>
</feature>
<feature type="region of interest" description="Disordered" evidence="2">
    <location>
        <begin position="849"/>
        <end position="915"/>
    </location>
</feature>
<feature type="compositionally biased region" description="Low complexity" evidence="2">
    <location>
        <begin position="849"/>
        <end position="864"/>
    </location>
</feature>
<feature type="compositionally biased region" description="Basic and acidic residues" evidence="2">
    <location>
        <begin position="876"/>
        <end position="891"/>
    </location>
</feature>
<feature type="binding site" evidence="1">
    <location>
        <position position="87"/>
    </location>
    <ligand>
        <name>ATP</name>
        <dbReference type="ChEBI" id="CHEBI:30616"/>
    </ligand>
</feature>
<feature type="binding site" evidence="1">
    <location>
        <begin position="105"/>
        <end position="109"/>
    </location>
    <ligand>
        <name>ATP</name>
        <dbReference type="ChEBI" id="CHEBI:30616"/>
    </ligand>
</feature>
<feature type="binding site" evidence="1">
    <location>
        <position position="512"/>
    </location>
    <ligand>
        <name>ATP</name>
        <dbReference type="ChEBI" id="CHEBI:30616"/>
    </ligand>
</feature>
<feature type="binding site" evidence="1">
    <location>
        <position position="895"/>
    </location>
    <ligand>
        <name>Zn(2+)</name>
        <dbReference type="ChEBI" id="CHEBI:29105"/>
    </ligand>
</feature>
<feature type="binding site" evidence="1">
    <location>
        <position position="897"/>
    </location>
    <ligand>
        <name>Zn(2+)</name>
        <dbReference type="ChEBI" id="CHEBI:29105"/>
    </ligand>
</feature>
<feature type="binding site" evidence="1">
    <location>
        <position position="906"/>
    </location>
    <ligand>
        <name>Zn(2+)</name>
        <dbReference type="ChEBI" id="CHEBI:29105"/>
    </ligand>
</feature>
<feature type="binding site" evidence="1">
    <location>
        <position position="907"/>
    </location>
    <ligand>
        <name>Zn(2+)</name>
        <dbReference type="ChEBI" id="CHEBI:29105"/>
    </ligand>
</feature>
<evidence type="ECO:0000255" key="1">
    <source>
        <dbReference type="HAMAP-Rule" id="MF_01382"/>
    </source>
</evidence>
<evidence type="ECO:0000256" key="2">
    <source>
        <dbReference type="SAM" id="MobiDB-lite"/>
    </source>
</evidence>
<reference key="1">
    <citation type="journal article" date="2010" name="BMC Genomics">
        <title>A genomic perspective on the potential of Actinobacillus succinogenes for industrial succinate production.</title>
        <authorList>
            <person name="McKinlay J.B."/>
            <person name="Laivenieks M."/>
            <person name="Schindler B.D."/>
            <person name="McKinlay A.A."/>
            <person name="Siddaramappa S."/>
            <person name="Challacombe J.F."/>
            <person name="Lowry S.R."/>
            <person name="Clum A."/>
            <person name="Lapidus A.L."/>
            <person name="Burkhart K.B."/>
            <person name="Harkins V."/>
            <person name="Vieille C."/>
        </authorList>
    </citation>
    <scope>NUCLEOTIDE SEQUENCE [LARGE SCALE GENOMIC DNA]</scope>
    <source>
        <strain>ATCC 55618 / DSM 22257 / CCUG 43843 / 130Z</strain>
    </source>
</reference>
<dbReference type="EC" id="7.4.2.8" evidence="1"/>
<dbReference type="EMBL" id="CP000746">
    <property type="protein sequence ID" value="ABR75367.1"/>
    <property type="molecule type" value="Genomic_DNA"/>
</dbReference>
<dbReference type="RefSeq" id="WP_012073743.1">
    <property type="nucleotide sequence ID" value="NC_009655.1"/>
</dbReference>
<dbReference type="SMR" id="A6VQX0"/>
<dbReference type="STRING" id="339671.Asuc_2021"/>
<dbReference type="KEGG" id="asu:Asuc_2021"/>
<dbReference type="eggNOG" id="COG0653">
    <property type="taxonomic scope" value="Bacteria"/>
</dbReference>
<dbReference type="HOGENOM" id="CLU_005314_3_0_6"/>
<dbReference type="OrthoDB" id="9805579at2"/>
<dbReference type="Proteomes" id="UP000001114">
    <property type="component" value="Chromosome"/>
</dbReference>
<dbReference type="GO" id="GO:0031522">
    <property type="term" value="C:cell envelope Sec protein transport complex"/>
    <property type="evidence" value="ECO:0007669"/>
    <property type="project" value="TreeGrafter"/>
</dbReference>
<dbReference type="GO" id="GO:0005829">
    <property type="term" value="C:cytosol"/>
    <property type="evidence" value="ECO:0007669"/>
    <property type="project" value="TreeGrafter"/>
</dbReference>
<dbReference type="GO" id="GO:0005886">
    <property type="term" value="C:plasma membrane"/>
    <property type="evidence" value="ECO:0007669"/>
    <property type="project" value="UniProtKB-SubCell"/>
</dbReference>
<dbReference type="GO" id="GO:0005524">
    <property type="term" value="F:ATP binding"/>
    <property type="evidence" value="ECO:0007669"/>
    <property type="project" value="UniProtKB-UniRule"/>
</dbReference>
<dbReference type="GO" id="GO:0046872">
    <property type="term" value="F:metal ion binding"/>
    <property type="evidence" value="ECO:0007669"/>
    <property type="project" value="UniProtKB-KW"/>
</dbReference>
<dbReference type="GO" id="GO:0008564">
    <property type="term" value="F:protein-exporting ATPase activity"/>
    <property type="evidence" value="ECO:0007669"/>
    <property type="project" value="UniProtKB-EC"/>
</dbReference>
<dbReference type="GO" id="GO:0065002">
    <property type="term" value="P:intracellular protein transmembrane transport"/>
    <property type="evidence" value="ECO:0007669"/>
    <property type="project" value="UniProtKB-UniRule"/>
</dbReference>
<dbReference type="GO" id="GO:0017038">
    <property type="term" value="P:protein import"/>
    <property type="evidence" value="ECO:0007669"/>
    <property type="project" value="InterPro"/>
</dbReference>
<dbReference type="GO" id="GO:0006605">
    <property type="term" value="P:protein targeting"/>
    <property type="evidence" value="ECO:0007669"/>
    <property type="project" value="UniProtKB-UniRule"/>
</dbReference>
<dbReference type="GO" id="GO:0043952">
    <property type="term" value="P:protein transport by the Sec complex"/>
    <property type="evidence" value="ECO:0007669"/>
    <property type="project" value="TreeGrafter"/>
</dbReference>
<dbReference type="CDD" id="cd17928">
    <property type="entry name" value="DEXDc_SecA"/>
    <property type="match status" value="1"/>
</dbReference>
<dbReference type="CDD" id="cd18803">
    <property type="entry name" value="SF2_C_secA"/>
    <property type="match status" value="1"/>
</dbReference>
<dbReference type="FunFam" id="1.10.3060.10:FF:000001">
    <property type="entry name" value="Preprotein translocase subunit SecA"/>
    <property type="match status" value="1"/>
</dbReference>
<dbReference type="FunFam" id="3.40.50.300:FF:000113">
    <property type="entry name" value="Preprotein translocase subunit SecA"/>
    <property type="match status" value="1"/>
</dbReference>
<dbReference type="FunFam" id="3.90.1440.10:FF:000001">
    <property type="entry name" value="Preprotein translocase subunit SecA"/>
    <property type="match status" value="1"/>
</dbReference>
<dbReference type="Gene3D" id="1.10.3060.10">
    <property type="entry name" value="Helical scaffold and wing domains of SecA"/>
    <property type="match status" value="1"/>
</dbReference>
<dbReference type="Gene3D" id="3.40.50.300">
    <property type="entry name" value="P-loop containing nucleotide triphosphate hydrolases"/>
    <property type="match status" value="2"/>
</dbReference>
<dbReference type="Gene3D" id="3.90.1440.10">
    <property type="entry name" value="SecA, preprotein cross-linking domain"/>
    <property type="match status" value="1"/>
</dbReference>
<dbReference type="HAMAP" id="MF_01382">
    <property type="entry name" value="SecA"/>
    <property type="match status" value="1"/>
</dbReference>
<dbReference type="InterPro" id="IPR014001">
    <property type="entry name" value="Helicase_ATP-bd"/>
</dbReference>
<dbReference type="InterPro" id="IPR001650">
    <property type="entry name" value="Helicase_C-like"/>
</dbReference>
<dbReference type="InterPro" id="IPR027417">
    <property type="entry name" value="P-loop_NTPase"/>
</dbReference>
<dbReference type="InterPro" id="IPR004027">
    <property type="entry name" value="SEC_C_motif"/>
</dbReference>
<dbReference type="InterPro" id="IPR000185">
    <property type="entry name" value="SecA"/>
</dbReference>
<dbReference type="InterPro" id="IPR020937">
    <property type="entry name" value="SecA_CS"/>
</dbReference>
<dbReference type="InterPro" id="IPR011115">
    <property type="entry name" value="SecA_DEAD"/>
</dbReference>
<dbReference type="InterPro" id="IPR014018">
    <property type="entry name" value="SecA_motor_DEAD"/>
</dbReference>
<dbReference type="InterPro" id="IPR011130">
    <property type="entry name" value="SecA_preprotein_X-link_dom"/>
</dbReference>
<dbReference type="InterPro" id="IPR044722">
    <property type="entry name" value="SecA_SF2_C"/>
</dbReference>
<dbReference type="InterPro" id="IPR011116">
    <property type="entry name" value="SecA_Wing/Scaffold"/>
</dbReference>
<dbReference type="InterPro" id="IPR036266">
    <property type="entry name" value="SecA_Wing/Scaffold_sf"/>
</dbReference>
<dbReference type="InterPro" id="IPR036670">
    <property type="entry name" value="SecA_X-link_sf"/>
</dbReference>
<dbReference type="NCBIfam" id="NF009538">
    <property type="entry name" value="PRK12904.1"/>
    <property type="match status" value="1"/>
</dbReference>
<dbReference type="NCBIfam" id="TIGR00963">
    <property type="entry name" value="secA"/>
    <property type="match status" value="1"/>
</dbReference>
<dbReference type="PANTHER" id="PTHR30612:SF0">
    <property type="entry name" value="CHLOROPLAST PROTEIN-TRANSPORTING ATPASE"/>
    <property type="match status" value="1"/>
</dbReference>
<dbReference type="PANTHER" id="PTHR30612">
    <property type="entry name" value="SECA INNER MEMBRANE COMPONENT OF SEC PROTEIN SECRETION SYSTEM"/>
    <property type="match status" value="1"/>
</dbReference>
<dbReference type="Pfam" id="PF21090">
    <property type="entry name" value="P-loop_SecA"/>
    <property type="match status" value="1"/>
</dbReference>
<dbReference type="Pfam" id="PF02810">
    <property type="entry name" value="SEC-C"/>
    <property type="match status" value="1"/>
</dbReference>
<dbReference type="Pfam" id="PF07517">
    <property type="entry name" value="SecA_DEAD"/>
    <property type="match status" value="1"/>
</dbReference>
<dbReference type="Pfam" id="PF01043">
    <property type="entry name" value="SecA_PP_bind"/>
    <property type="match status" value="1"/>
</dbReference>
<dbReference type="Pfam" id="PF07516">
    <property type="entry name" value="SecA_SW"/>
    <property type="match status" value="1"/>
</dbReference>
<dbReference type="PRINTS" id="PR00906">
    <property type="entry name" value="SECA"/>
</dbReference>
<dbReference type="SMART" id="SM00957">
    <property type="entry name" value="SecA_DEAD"/>
    <property type="match status" value="1"/>
</dbReference>
<dbReference type="SMART" id="SM00958">
    <property type="entry name" value="SecA_PP_bind"/>
    <property type="match status" value="1"/>
</dbReference>
<dbReference type="SUPFAM" id="SSF81886">
    <property type="entry name" value="Helical scaffold and wing domains of SecA"/>
    <property type="match status" value="1"/>
</dbReference>
<dbReference type="SUPFAM" id="SSF52540">
    <property type="entry name" value="P-loop containing nucleoside triphosphate hydrolases"/>
    <property type="match status" value="2"/>
</dbReference>
<dbReference type="SUPFAM" id="SSF81767">
    <property type="entry name" value="Pre-protein crosslinking domain of SecA"/>
    <property type="match status" value="1"/>
</dbReference>
<dbReference type="PROSITE" id="PS01312">
    <property type="entry name" value="SECA"/>
    <property type="match status" value="1"/>
</dbReference>
<dbReference type="PROSITE" id="PS51196">
    <property type="entry name" value="SECA_MOTOR_DEAD"/>
    <property type="match status" value="1"/>
</dbReference>
<protein>
    <recommendedName>
        <fullName evidence="1">Protein translocase subunit SecA</fullName>
        <ecNumber evidence="1">7.4.2.8</ecNumber>
    </recommendedName>
</protein>
<sequence length="915" mass="103477">MLRTIATKIFGSRNERILRRLNKIVKKINALEPSFEALSDDELKAKTDEFRQRLANGETLEQLMPEAFATVREASRRILGMRHFDVQLVGGMVLTNRNIAEMRTGEGKTLTATLPCYLNALTGKGVHVVTVNDYLARRDAETNRPLFEFLGMSVAVNVPGLDPEVKRDAYKADITYATNSELGFDYLRDNLAHSAQERFQRPLHYALVDEVDSILIDEARTPLIISGPAADSSELYIAINKLIPSLVEQEKEDSDEFQGSGDYSLDLKNKQANLTERGLEKCENWLVEQGLMRPEDSLYSASNLGLFHHISAALRAHTLFQRDVDYVVKDGEIVIVDEHTGRTMAGRRWSDGLHQAIEAKEGVKIQGENQTVASITYQNFFRLYEKLAGMTGTADTEAFEFQQIYGLETVVIPTNRPMIRDDKTDIMFENEQYKFDAIIEDIKDCIARHQPVLVGTASIEKSELLSAALDKAGIAHNVLNAKFHAQEAEIIANAGYPGAVTIATNMAGRGTDIVLGGNWKAEVAKLESPTEEQIEAIKVAWQQRHDEVMQAGGLHIIGTERHESRRIDNQLRGRSGRQGDPGSSRFYLSLDDALMRIYLNEGKLNMMRKMFTTAGEAMESKLLAKVIASAQAKVEAHNFDGRKNLLQYDDVANDQRHAIYEQRNVLLDNDDISETIDAIREDVFNSVIDEYIPPQSLEEQWKIPELEERLRTDFTLDLPVRQWLEDDNQLHEDTLRERIIDAAKAEYQRKEELAGSESMRSFEKGIMLQTLDELWKEHLSAMDYLRQGIHLRGYAQKDPKQEYKKESFQMFTEMLDALKLSVIRTLSRVRVRTQEEIEEAERQYQAAMAAQQQARQAPLPNAPASSEPTQGSELSPEEKVARVAAERHIGRNEPCPCGSGKKYKYCHGSRAKDHA</sequence>
<gene>
    <name evidence="1" type="primary">secA</name>
    <name type="ordered locus">Asuc_2021</name>
</gene>
<organism>
    <name type="scientific">Actinobacillus succinogenes (strain ATCC 55618 / DSM 22257 / CCUG 43843 / 130Z)</name>
    <dbReference type="NCBI Taxonomy" id="339671"/>
    <lineage>
        <taxon>Bacteria</taxon>
        <taxon>Pseudomonadati</taxon>
        <taxon>Pseudomonadota</taxon>
        <taxon>Gammaproteobacteria</taxon>
        <taxon>Pasteurellales</taxon>
        <taxon>Pasteurellaceae</taxon>
        <taxon>Actinobacillus</taxon>
    </lineage>
</organism>
<comment type="function">
    <text evidence="1">Part of the Sec protein translocase complex. Interacts with the SecYEG preprotein conducting channel. Has a central role in coupling the hydrolysis of ATP to the transfer of proteins into and across the cell membrane, serving both as a receptor for the preprotein-SecB complex and as an ATP-driven molecular motor driving the stepwise translocation of polypeptide chains across the membrane.</text>
</comment>
<comment type="catalytic activity">
    <reaction evidence="1">
        <text>ATP + H2O + cellular proteinSide 1 = ADP + phosphate + cellular proteinSide 2.</text>
        <dbReference type="EC" id="7.4.2.8"/>
    </reaction>
</comment>
<comment type="cofactor">
    <cofactor evidence="1">
        <name>Zn(2+)</name>
        <dbReference type="ChEBI" id="CHEBI:29105"/>
    </cofactor>
    <text evidence="1">May bind 1 zinc ion per subunit.</text>
</comment>
<comment type="subunit">
    <text evidence="1">Monomer and homodimer. Part of the essential Sec protein translocation apparatus which comprises SecA, SecYEG and auxiliary proteins SecDF-YajC and YidC.</text>
</comment>
<comment type="subcellular location">
    <subcellularLocation>
        <location evidence="1">Cell inner membrane</location>
        <topology evidence="1">Peripheral membrane protein</topology>
        <orientation evidence="1">Cytoplasmic side</orientation>
    </subcellularLocation>
    <subcellularLocation>
        <location evidence="1">Cytoplasm</location>
    </subcellularLocation>
    <text evidence="1">Distribution is 50-50.</text>
</comment>
<comment type="similarity">
    <text evidence="1">Belongs to the SecA family.</text>
</comment>
<name>SECA_ACTSZ</name>
<keyword id="KW-0067">ATP-binding</keyword>
<keyword id="KW-0997">Cell inner membrane</keyword>
<keyword id="KW-1003">Cell membrane</keyword>
<keyword id="KW-0963">Cytoplasm</keyword>
<keyword id="KW-0472">Membrane</keyword>
<keyword id="KW-0479">Metal-binding</keyword>
<keyword id="KW-0547">Nucleotide-binding</keyword>
<keyword id="KW-0653">Protein transport</keyword>
<keyword id="KW-1185">Reference proteome</keyword>
<keyword id="KW-1278">Translocase</keyword>
<keyword id="KW-0811">Translocation</keyword>
<keyword id="KW-0813">Transport</keyword>
<keyword id="KW-0862">Zinc</keyword>
<proteinExistence type="inferred from homology"/>